<dbReference type="EMBL" id="BC134919">
    <property type="protein sequence ID" value="AAI34920.1"/>
    <property type="molecule type" value="mRNA"/>
</dbReference>
<dbReference type="RefSeq" id="NP_001082796.1">
    <property type="nucleotide sequence ID" value="NM_001089327.1"/>
</dbReference>
<dbReference type="FunCoup" id="A4IG42">
    <property type="interactions" value="587"/>
</dbReference>
<dbReference type="STRING" id="7955.ENSDARP00000140187"/>
<dbReference type="MEROPS" id="M98.A01"/>
<dbReference type="PaxDb" id="7955-ENSDARP00000111062"/>
<dbReference type="PeptideAtlas" id="A4IG42"/>
<dbReference type="GeneID" id="323315"/>
<dbReference type="KEGG" id="dre:323315"/>
<dbReference type="AGR" id="ZFIN:ZDB-GENE-030131-2035"/>
<dbReference type="ZFIN" id="ZDB-GENE-030131-2035">
    <property type="gene designation" value="zgc:162193"/>
</dbReference>
<dbReference type="eggNOG" id="ENOG502QQUS">
    <property type="taxonomic scope" value="Eukaryota"/>
</dbReference>
<dbReference type="InParanoid" id="A4IG42"/>
<dbReference type="OrthoDB" id="10260387at2759"/>
<dbReference type="PhylomeDB" id="A4IG42"/>
<dbReference type="PRO" id="PR:A4IG42"/>
<dbReference type="Proteomes" id="UP000000437">
    <property type="component" value="Alternate scaffold 15"/>
</dbReference>
<dbReference type="Proteomes" id="UP000000437">
    <property type="component" value="Chromosome 15"/>
</dbReference>
<dbReference type="GO" id="GO:0005886">
    <property type="term" value="C:plasma membrane"/>
    <property type="evidence" value="ECO:0000318"/>
    <property type="project" value="GO_Central"/>
</dbReference>
<dbReference type="GO" id="GO:0044325">
    <property type="term" value="F:transmembrane transporter binding"/>
    <property type="evidence" value="ECO:0000318"/>
    <property type="project" value="GO_Central"/>
</dbReference>
<dbReference type="FunFam" id="1.10.390.30:FF:000001">
    <property type="entry name" value="TRPM8 channel-associated factor 1"/>
    <property type="match status" value="1"/>
</dbReference>
<dbReference type="FunFam" id="3.40.390.80:FF:000001">
    <property type="entry name" value="TRPM8 channel-associated factor 1"/>
    <property type="match status" value="1"/>
</dbReference>
<dbReference type="Gene3D" id="3.40.390.80">
    <property type="entry name" value="Peptidase M60, enhancin-like domain 2"/>
    <property type="match status" value="1"/>
</dbReference>
<dbReference type="Gene3D" id="1.10.390.30">
    <property type="entry name" value="Peptidase M60, enhancin-like domain 3"/>
    <property type="match status" value="1"/>
</dbReference>
<dbReference type="InterPro" id="IPR029062">
    <property type="entry name" value="Class_I_gatase-like"/>
</dbReference>
<dbReference type="InterPro" id="IPR035423">
    <property type="entry name" value="M60-like_N"/>
</dbReference>
<dbReference type="InterPro" id="IPR042279">
    <property type="entry name" value="Pep_M60_3"/>
</dbReference>
<dbReference type="InterPro" id="IPR031161">
    <property type="entry name" value="Peptidase_M60_dom"/>
</dbReference>
<dbReference type="InterPro" id="IPR051244">
    <property type="entry name" value="TCAF"/>
</dbReference>
<dbReference type="PANTHER" id="PTHR15730">
    <property type="entry name" value="EXPERIMENTAL AUTOIMMUNE PROSTATITIS ANTIGEN 2-RELATED"/>
    <property type="match status" value="1"/>
</dbReference>
<dbReference type="PANTHER" id="PTHR15730:SF5">
    <property type="entry name" value="SI:CH211-210B2.2-RELATED"/>
    <property type="match status" value="1"/>
</dbReference>
<dbReference type="Pfam" id="PF17291">
    <property type="entry name" value="M60-like_N"/>
    <property type="match status" value="1"/>
</dbReference>
<dbReference type="Pfam" id="PF13402">
    <property type="entry name" value="Peptidase_M60"/>
    <property type="match status" value="1"/>
</dbReference>
<dbReference type="SMART" id="SM01276">
    <property type="entry name" value="M60-like"/>
    <property type="match status" value="1"/>
</dbReference>
<dbReference type="SUPFAM" id="SSF52317">
    <property type="entry name" value="Class I glutamine amidotransferase-like"/>
    <property type="match status" value="1"/>
</dbReference>
<dbReference type="PROSITE" id="PS51723">
    <property type="entry name" value="PEPTIDASE_M60"/>
    <property type="match status" value="1"/>
</dbReference>
<organism>
    <name type="scientific">Danio rerio</name>
    <name type="common">Zebrafish</name>
    <name type="synonym">Brachydanio rerio</name>
    <dbReference type="NCBI Taxonomy" id="7955"/>
    <lineage>
        <taxon>Eukaryota</taxon>
        <taxon>Metazoa</taxon>
        <taxon>Chordata</taxon>
        <taxon>Craniata</taxon>
        <taxon>Vertebrata</taxon>
        <taxon>Euteleostomi</taxon>
        <taxon>Actinopterygii</taxon>
        <taxon>Neopterygii</taxon>
        <taxon>Teleostei</taxon>
        <taxon>Ostariophysi</taxon>
        <taxon>Cypriniformes</taxon>
        <taxon>Danionidae</taxon>
        <taxon>Danioninae</taxon>
        <taxon>Danio</taxon>
    </lineage>
</organism>
<sequence>MAREQDYYTLMSGMQQLDLQGKAVPSDLVLIGEHAFPLAMNPRGQVLMAASHYGRGRIVVLGHEEYLTRFPGLIENAIMWLMPCTGDAGVVGIQKSLRTVAENLNYSPFKTELGDFQDRFAIYITDAYSVESSAKDLIAFLKAGGGLIIAGQAWSWSYEHPQENTIRNFPGNKVCSVAGIYFSELEGEVGTFPVPRNIPSSWLAVAIGKDFKEDLEFLLEGVSEFDTQGGAIASEVMVHGPLAFPIAVTPNGKTFIAGAYYGQGRVIVVSHEGYMGRDSLSSFMINAIKWLDEGRKGVVGIVPNLTAAHTVLSKSGLDCQLTGFREDLSVYVCTSYSDAQCAEIQEFVAEGGGLLIGGHAWYWAQTHCGSNVMTEYPGNHILNKMGLCLLGNTLGGGLYKAPEIEHSCKHGYHFRSMLQRFAQHVSQGQELTDREQGCLKQLGTDCASYLQMRCHDSAAYTSVVALLSDIVKEVGVPQVCSNCPVESPKDHLMLHIGTEVYKVTPDPDALLPYIIKDRPNLPTLSNARVRITANTGGCEEWISTGLYLSPGMKTYIAVPPEIVGKNWQVQLGCQTDNIGGSNTLKRAPVVHARFPLDSEMVQVWNLWGGLIYLIAPSQTKVDGVEIVVQNAVQAPYFKSGETSVADWVSHIRQAPAPWAELEFENLIMTFDSAFIRNLDRPDEVAKLWDTIMRTITDLAARPPKLPRKERFVADVQISYGFMHAGYPIMMHSGSAPGLVNVEEAYKCGLWGAIHELGHNQQRGVWEFPPHTTECTCNLWSLYVHEQVFGIKSANAHPAITPADRQARTKMYFDGGKDLNSWCMWMALETYMQLQEKFGWDAFKKVFSLYHDMTGVPNDNAGKMNLYAQTFSKVVNLNLSPFFKAWGWPIQPNTEQNLSHLPAWSDHPVSQYA</sequence>
<comment type="function">
    <text evidence="1 2">May play a role in the regulation of the cation channel TRPM8 activity.</text>
</comment>
<comment type="similarity">
    <text evidence="4">Belongs to the TCAF family.</text>
</comment>
<evidence type="ECO:0000250" key="1">
    <source>
        <dbReference type="UniProtKB" id="A6NFQ2"/>
    </source>
</evidence>
<evidence type="ECO:0000250" key="2">
    <source>
        <dbReference type="UniProtKB" id="Q9Y4C2"/>
    </source>
</evidence>
<evidence type="ECO:0000255" key="3">
    <source>
        <dbReference type="PROSITE-ProRule" id="PRU01060"/>
    </source>
</evidence>
<evidence type="ECO:0000305" key="4"/>
<feature type="chain" id="PRO_0000320189" description="TRPM8 channel-associated factor homolog">
    <location>
        <begin position="1"/>
        <end position="912"/>
    </location>
</feature>
<feature type="domain" description="Peptidase M60" evidence="3">
    <location>
        <begin position="539"/>
        <end position="838"/>
    </location>
</feature>
<reference key="1">
    <citation type="submission" date="2007-03" db="EMBL/GenBank/DDBJ databases">
        <authorList>
            <consortium name="NIH - Zebrafish Gene Collection (ZGC) project"/>
        </authorList>
    </citation>
    <scope>NUCLEOTIDE SEQUENCE [LARGE SCALE MRNA]</scope>
</reference>
<name>TCAF_DANRE</name>
<accession>A4IG42</accession>
<proteinExistence type="evidence at transcript level"/>
<protein>
    <recommendedName>
        <fullName>TRPM8 channel-associated factor homolog</fullName>
    </recommendedName>
</protein>
<gene>
    <name type="primary">tcaf</name>
    <name type="ORF">zgc:162193</name>
</gene>
<keyword id="KW-1185">Reference proteome</keyword>